<comment type="function">
    <text evidence="3">Defense against chitin-containing fungal pathogens.</text>
</comment>
<comment type="catalytic activity">
    <reaction evidence="1">
        <text>Random endo-hydrolysis of N-acetyl-beta-D-glucosaminide (1-&gt;4)-beta-linkages in chitin and chitodextrins.</text>
        <dbReference type="EC" id="3.2.1.14"/>
    </reaction>
</comment>
<comment type="similarity">
    <text evidence="2">Belongs to the glycosyl hydrolase 19 family. Chitinase class I subfamily.</text>
</comment>
<reference evidence="3" key="1">
    <citation type="submission" date="2008-07" db="UniProtKB">
        <authorList>
            <person name="Gomez Ros L.V."/>
            <person name="Almagro L."/>
            <person name="Ros Barcelo A."/>
            <person name="Pedreno M.A."/>
        </authorList>
    </citation>
    <scope>PROTEIN SEQUENCE</scope>
</reference>
<keyword id="KW-0119">Carbohydrate metabolism</keyword>
<keyword id="KW-0146">Chitin degradation</keyword>
<keyword id="KW-0903">Direct protein sequencing</keyword>
<keyword id="KW-0326">Glycosidase</keyword>
<keyword id="KW-0378">Hydrolase</keyword>
<keyword id="KW-0379">Hydroxylation</keyword>
<keyword id="KW-0611">Plant defense</keyword>
<keyword id="KW-0624">Polysaccharide degradation</keyword>
<dbReference type="EC" id="3.2.1.14"/>
<dbReference type="SMR" id="P86081"/>
<dbReference type="GO" id="GO:0008843">
    <property type="term" value="F:endochitinase activity"/>
    <property type="evidence" value="ECO:0007669"/>
    <property type="project" value="UniProtKB-EC"/>
</dbReference>
<dbReference type="GO" id="GO:0016998">
    <property type="term" value="P:cell wall macromolecule catabolic process"/>
    <property type="evidence" value="ECO:0007669"/>
    <property type="project" value="InterPro"/>
</dbReference>
<dbReference type="GO" id="GO:0006032">
    <property type="term" value="P:chitin catabolic process"/>
    <property type="evidence" value="ECO:0007669"/>
    <property type="project" value="UniProtKB-KW"/>
</dbReference>
<dbReference type="GO" id="GO:0006952">
    <property type="term" value="P:defense response"/>
    <property type="evidence" value="ECO:0007669"/>
    <property type="project" value="UniProtKB-KW"/>
</dbReference>
<dbReference type="GO" id="GO:0000272">
    <property type="term" value="P:polysaccharide catabolic process"/>
    <property type="evidence" value="ECO:0007669"/>
    <property type="project" value="UniProtKB-KW"/>
</dbReference>
<dbReference type="Gene3D" id="1.10.530.10">
    <property type="match status" value="1"/>
</dbReference>
<dbReference type="Gene3D" id="3.30.20.10">
    <property type="entry name" value="Endochitinase, domain 2"/>
    <property type="match status" value="1"/>
</dbReference>
<dbReference type="InterPro" id="IPR000726">
    <property type="entry name" value="Glyco_hydro_19_cat"/>
</dbReference>
<dbReference type="InterPro" id="IPR023346">
    <property type="entry name" value="Lysozyme-like_dom_sf"/>
</dbReference>
<dbReference type="PANTHER" id="PTHR22595">
    <property type="entry name" value="CHITINASE-RELATED"/>
    <property type="match status" value="1"/>
</dbReference>
<dbReference type="PANTHER" id="PTHR22595:SF184">
    <property type="entry name" value="ENDOCHITINASE A"/>
    <property type="match status" value="1"/>
</dbReference>
<dbReference type="Pfam" id="PF00182">
    <property type="entry name" value="Glyco_hydro_19"/>
    <property type="match status" value="1"/>
</dbReference>
<dbReference type="SUPFAM" id="SSF53955">
    <property type="entry name" value="Lysozyme-like"/>
    <property type="match status" value="1"/>
</dbReference>
<name>CHI1_CAPCH</name>
<accession>P86081</accession>
<feature type="chain" id="PRO_0000362988" description="Endochitinase 1">
    <location>
        <begin position="1" status="less than"/>
        <end position="44" status="greater than"/>
    </location>
</feature>
<feature type="unsure residue" description="F or M">
    <location>
        <position position="3"/>
    </location>
</feature>
<feature type="unsure residue" description="F or M">
    <location>
        <position position="9"/>
    </location>
</feature>
<feature type="unsure residue" description="I or L">
    <location>
        <position position="10"/>
    </location>
</feature>
<feature type="unsure residue" description="K or Q">
    <location>
        <position position="14"/>
    </location>
</feature>
<feature type="unsure residue" description="F or M">
    <location>
        <position position="16"/>
    </location>
</feature>
<feature type="unsure residue" description="F or M">
    <location>
        <position position="19"/>
    </location>
</feature>
<feature type="unsure residue" description="I or L">
    <location>
        <position position="31"/>
    </location>
</feature>
<feature type="unsure residue" description="Q or K">
    <location>
        <position position="32"/>
    </location>
</feature>
<feature type="unsure residue" description="I or L">
    <location>
        <position position="33"/>
    </location>
</feature>
<feature type="non-consecutive residues" evidence="3">
    <location>
        <begin position="28"/>
        <end position="29"/>
    </location>
</feature>
<feature type="non-terminal residue">
    <location>
        <position position="1"/>
    </location>
</feature>
<feature type="non-terminal residue">
    <location>
        <position position="44"/>
    </location>
</feature>
<organism>
    <name type="scientific">Capsicum chinense</name>
    <name type="common">Scotch bonnet</name>
    <name type="synonym">Bonnet pepper</name>
    <dbReference type="NCBI Taxonomy" id="80379"/>
    <lineage>
        <taxon>Eukaryota</taxon>
        <taxon>Viridiplantae</taxon>
        <taxon>Streptophyta</taxon>
        <taxon>Embryophyta</taxon>
        <taxon>Tracheophyta</taxon>
        <taxon>Spermatophyta</taxon>
        <taxon>Magnoliopsida</taxon>
        <taxon>eudicotyledons</taxon>
        <taxon>Gunneridae</taxon>
        <taxon>Pentapetalae</taxon>
        <taxon>asterids</taxon>
        <taxon>lamiids</taxon>
        <taxon>Solanales</taxon>
        <taxon>Solanaceae</taxon>
        <taxon>Solanoideae</taxon>
        <taxon>Capsiceae</taxon>
        <taxon>Capsicum</taxon>
    </lineage>
</organism>
<evidence type="ECO:0000250" key="1">
    <source>
        <dbReference type="UniProtKB" id="P24091"/>
    </source>
</evidence>
<evidence type="ECO:0000255" key="2"/>
<evidence type="ECO:0000305" key="3"/>
<protein>
    <recommendedName>
        <fullName evidence="1">Endochitinase 1</fullName>
        <ecNumber>3.2.1.14</ecNumber>
    </recommendedName>
</protein>
<sequence>NNFYSYNAFITAAKSFPGFGTTGDTAVRGPIQISYNYNYGPCGR</sequence>
<proteinExistence type="evidence at protein level"/>